<keyword id="KW-0010">Activator</keyword>
<keyword id="KW-0025">Alternative splicing</keyword>
<keyword id="KW-0238">DNA-binding</keyword>
<keyword id="KW-0256">Endoplasmic reticulum</keyword>
<keyword id="KW-0325">Glycoprotein</keyword>
<keyword id="KW-0333">Golgi apparatus</keyword>
<keyword id="KW-0472">Membrane</keyword>
<keyword id="KW-0539">Nucleus</keyword>
<keyword id="KW-1267">Proteomics identification</keyword>
<keyword id="KW-1185">Reference proteome</keyword>
<keyword id="KW-0735">Signal-anchor</keyword>
<keyword id="KW-0804">Transcription</keyword>
<keyword id="KW-0805">Transcription regulation</keyword>
<keyword id="KW-0812">Transmembrane</keyword>
<keyword id="KW-1133">Transmembrane helix</keyword>
<keyword id="KW-0834">Unfolded protein response</keyword>
<name>CR3L4_HUMAN</name>
<sequence>MDLGIPDLLDAWLEPPEDIFSTGSVLELGLHCPPPEVPVTRLQEQGLQGWKSGGDRGCGLQESEPEDFLKLFIDPNEVYCSEASPGSDSGISEDPCHPDSPPAPRATSSPMLYEVVYEAGALERMQGETGPNVGLISIQLDQWSPAFMVPDSCMVSELPFDAHAHILPRAGTVAPVPCTTLLPCQTLFLTDEEKRLLGQEGVSLPSHLPLTKAEERVLKKVRRKIRNKQSAQDSRRRKKEYIDGLESRVAACSAQNQELQKKVQELERHNISLVAQLRQLQTLIAQTSNKAAQTSTCVLILLFSLALIILPSFSPFQSRPEAGSEDYQPHGVTSRNILTHKDVTENLETQVVESRLREPPGAKDANGSTRTLLEKMGGKPRPSGRIRSVLHADEM</sequence>
<comment type="function">
    <text evidence="1 8">Transcriptional activator that may play a role in the unfolded protein response. Binds to the UPR element (UPRE) but not to CRE element. Preferentially binds DNA with to the consensus sequence 5'-T[GT]ACGT[GA][GT]-3' and has transcriptional activation activity from UPRE. Binds to NF-kappa-B site and has transcriptional activation activity from NF-kappa-B-containing regulatory elements (By similarity).</text>
</comment>
<comment type="subunit">
    <text evidence="1">Binds DNA as a dimer.</text>
</comment>
<comment type="interaction">
    <interactant intactId="EBI-3925424">
        <id>Q8TEY5</id>
    </interactant>
    <interactant intactId="EBI-2515857">
        <id>O43681</id>
        <label>GET3</label>
    </interactant>
    <organismsDiffer>false</organismsDiffer>
    <experiments>3</experiments>
</comment>
<comment type="subcellular location">
    <subcellularLocation>
        <location>Endoplasmic reticulum membrane</location>
        <topology>Single-pass type II membrane protein</topology>
    </subcellularLocation>
    <subcellularLocation>
        <location evidence="11">Golgi apparatus membrane</location>
        <topology evidence="11">Single-pass type II membrane protein</topology>
    </subcellularLocation>
    <text>May also be located in Golgi apparatus.</text>
</comment>
<comment type="subcellular location">
    <molecule>Processed cyclic AMP-responsive element-binding protein 3-like protein 4</molecule>
    <subcellularLocation>
        <location>Nucleus</location>
    </subcellularLocation>
    <text evidence="1">Under ER stress the cleaved N-terminal cytoplasmic domain translocates into the nucleus.</text>
</comment>
<comment type="alternative products">
    <event type="alternative splicing"/>
    <isoform>
        <id>Q8TEY5-1</id>
        <name>1</name>
        <sequence type="displayed"/>
    </isoform>
    <isoform>
        <id>Q8TEY5-2</id>
        <name>2</name>
        <sequence type="described" ref="VSP_045426"/>
    </isoform>
</comment>
<comment type="tissue specificity">
    <text evidence="5 6 9">According to PubMed:11830526, exclusively expressed in the prostate. Expressed in breast and prostate cancer cell lines. Expressed in prostatic luminal epithelial cells (at protein level). Expression is significantly more abundant in prostate cancer than in benign prostatic tissue (prostatic hyperplasia). According to PubMed:12111373, also expressed in brain, pancreas and skeletal muscle, and at lower levels in small intestine, testis, leukocyte and thymus.</text>
</comment>
<comment type="induction">
    <text>By androgens.</text>
</comment>
<comment type="PTM">
    <text evidence="7">N-glycosylated in the C-terminal region.</text>
</comment>
<comment type="PTM">
    <text evidence="1">Controlled by regulated intramembrane proteolysis (RIP). Following ER stress a fragment containing the cytoplasmic transcription factor domain is released by proteolysis. The cleavage seems to be performed sequentially by site-1 and site-2 proteases (PS1 and PS2). PS1 cleavage may be suppressed by a determinant in the C-terminal region (By similarity).</text>
</comment>
<comment type="similarity">
    <text evidence="11">Belongs to the bZIP family. ATF subfamily.</text>
</comment>
<reference key="1">
    <citation type="journal article" date="2002" name="Cancer Res.">
        <title>AIbZIP, a novel bZIP gene located on chromosome 1q21.3 that is highly expressed in prostate tumors and of which the expression is up-regulated by androgens in LNCaP human prostate cancer cells.</title>
        <authorList>
            <person name="Qi H."/>
            <person name="Fillion C."/>
            <person name="Labrie Y."/>
            <person name="Grenier J."/>
            <person name="Fournier A."/>
            <person name="Berger L."/>
            <person name="El-Alfy M."/>
            <person name="Labrie C."/>
        </authorList>
    </citation>
    <scope>NUCLEOTIDE SEQUENCE [MRNA] (ISOFORM 1)</scope>
    <scope>TISSUE SPECIFICITY</scope>
</reference>
<reference key="2">
    <citation type="journal article" date="2002" name="J. Hum. Genet.">
        <title>Molecular cloning and characterization of a novel human cAMP response element-binding (CREB) gene (CREB4).</title>
        <authorList>
            <person name="Cao G."/>
            <person name="Ni X."/>
            <person name="Jiang M."/>
            <person name="Ma Y."/>
            <person name="Cheng H."/>
            <person name="Guo L."/>
            <person name="Ji C."/>
            <person name="Gu S."/>
            <person name="Xie Y."/>
            <person name="Mao Y."/>
        </authorList>
    </citation>
    <scope>NUCLEOTIDE SEQUENCE [MRNA] (ISOFORM 1)</scope>
    <scope>TISSUE SPECIFICITY</scope>
</reference>
<reference key="3">
    <citation type="submission" date="2000-12" db="EMBL/GenBank/DDBJ databases">
        <title>Homo sapiens and Mus musculus JAL gene.</title>
        <authorList>
            <person name="Fujita K."/>
            <person name="Hatakeyama S."/>
            <person name="Ishikawa F."/>
        </authorList>
    </citation>
    <scope>NUCLEOTIDE SEQUENCE [GENOMIC DNA / MRNA] (ISOFORM 1)</scope>
</reference>
<reference key="4">
    <citation type="submission" date="2001-08" db="EMBL/GenBank/DDBJ databases">
        <title>Human ATCE1 - a novel protein that contains a CRE binding domain.</title>
        <authorList>
            <person name="Guo J.H."/>
            <person name="Dai F.Y."/>
            <person name="Yu L."/>
        </authorList>
    </citation>
    <scope>NUCLEOTIDE SEQUENCE [MRNA] (ISOFORM 1)</scope>
</reference>
<reference key="5">
    <citation type="journal article" date="2004" name="Nat. Genet.">
        <title>Complete sequencing and characterization of 21,243 full-length human cDNAs.</title>
        <authorList>
            <person name="Ota T."/>
            <person name="Suzuki Y."/>
            <person name="Nishikawa T."/>
            <person name="Otsuki T."/>
            <person name="Sugiyama T."/>
            <person name="Irie R."/>
            <person name="Wakamatsu A."/>
            <person name="Hayashi K."/>
            <person name="Sato H."/>
            <person name="Nagai K."/>
            <person name="Kimura K."/>
            <person name="Makita H."/>
            <person name="Sekine M."/>
            <person name="Obayashi M."/>
            <person name="Nishi T."/>
            <person name="Shibahara T."/>
            <person name="Tanaka T."/>
            <person name="Ishii S."/>
            <person name="Yamamoto J."/>
            <person name="Saito K."/>
            <person name="Kawai Y."/>
            <person name="Isono Y."/>
            <person name="Nakamura Y."/>
            <person name="Nagahari K."/>
            <person name="Murakami K."/>
            <person name="Yasuda T."/>
            <person name="Iwayanagi T."/>
            <person name="Wagatsuma M."/>
            <person name="Shiratori A."/>
            <person name="Sudo H."/>
            <person name="Hosoiri T."/>
            <person name="Kaku Y."/>
            <person name="Kodaira H."/>
            <person name="Kondo H."/>
            <person name="Sugawara M."/>
            <person name="Takahashi M."/>
            <person name="Kanda K."/>
            <person name="Yokoi T."/>
            <person name="Furuya T."/>
            <person name="Kikkawa E."/>
            <person name="Omura Y."/>
            <person name="Abe K."/>
            <person name="Kamihara K."/>
            <person name="Katsuta N."/>
            <person name="Sato K."/>
            <person name="Tanikawa M."/>
            <person name="Yamazaki M."/>
            <person name="Ninomiya K."/>
            <person name="Ishibashi T."/>
            <person name="Yamashita H."/>
            <person name="Murakawa K."/>
            <person name="Fujimori K."/>
            <person name="Tanai H."/>
            <person name="Kimata M."/>
            <person name="Watanabe M."/>
            <person name="Hiraoka S."/>
            <person name="Chiba Y."/>
            <person name="Ishida S."/>
            <person name="Ono Y."/>
            <person name="Takiguchi S."/>
            <person name="Watanabe S."/>
            <person name="Yosida M."/>
            <person name="Hotuta T."/>
            <person name="Kusano J."/>
            <person name="Kanehori K."/>
            <person name="Takahashi-Fujii A."/>
            <person name="Hara H."/>
            <person name="Tanase T.-O."/>
            <person name="Nomura Y."/>
            <person name="Togiya S."/>
            <person name="Komai F."/>
            <person name="Hara R."/>
            <person name="Takeuchi K."/>
            <person name="Arita M."/>
            <person name="Imose N."/>
            <person name="Musashino K."/>
            <person name="Yuuki H."/>
            <person name="Oshima A."/>
            <person name="Sasaki N."/>
            <person name="Aotsuka S."/>
            <person name="Yoshikawa Y."/>
            <person name="Matsunawa H."/>
            <person name="Ichihara T."/>
            <person name="Shiohata N."/>
            <person name="Sano S."/>
            <person name="Moriya S."/>
            <person name="Momiyama H."/>
            <person name="Satoh N."/>
            <person name="Takami S."/>
            <person name="Terashima Y."/>
            <person name="Suzuki O."/>
            <person name="Nakagawa S."/>
            <person name="Senoh A."/>
            <person name="Mizoguchi H."/>
            <person name="Goto Y."/>
            <person name="Shimizu F."/>
            <person name="Wakebe H."/>
            <person name="Hishigaki H."/>
            <person name="Watanabe T."/>
            <person name="Sugiyama A."/>
            <person name="Takemoto M."/>
            <person name="Kawakami B."/>
            <person name="Yamazaki M."/>
            <person name="Watanabe K."/>
            <person name="Kumagai A."/>
            <person name="Itakura S."/>
            <person name="Fukuzumi Y."/>
            <person name="Fujimori Y."/>
            <person name="Komiyama M."/>
            <person name="Tashiro H."/>
            <person name="Tanigami A."/>
            <person name="Fujiwara T."/>
            <person name="Ono T."/>
            <person name="Yamada K."/>
            <person name="Fujii Y."/>
            <person name="Ozaki K."/>
            <person name="Hirao M."/>
            <person name="Ohmori Y."/>
            <person name="Kawabata A."/>
            <person name="Hikiji T."/>
            <person name="Kobatake N."/>
            <person name="Inagaki H."/>
            <person name="Ikema Y."/>
            <person name="Okamoto S."/>
            <person name="Okitani R."/>
            <person name="Kawakami T."/>
            <person name="Noguchi S."/>
            <person name="Itoh T."/>
            <person name="Shigeta K."/>
            <person name="Senba T."/>
            <person name="Matsumura K."/>
            <person name="Nakajima Y."/>
            <person name="Mizuno T."/>
            <person name="Morinaga M."/>
            <person name="Sasaki M."/>
            <person name="Togashi T."/>
            <person name="Oyama M."/>
            <person name="Hata H."/>
            <person name="Watanabe M."/>
            <person name="Komatsu T."/>
            <person name="Mizushima-Sugano J."/>
            <person name="Satoh T."/>
            <person name="Shirai Y."/>
            <person name="Takahashi Y."/>
            <person name="Nakagawa K."/>
            <person name="Okumura K."/>
            <person name="Nagase T."/>
            <person name="Nomura N."/>
            <person name="Kikuchi H."/>
            <person name="Masuho Y."/>
            <person name="Yamashita R."/>
            <person name="Nakai K."/>
            <person name="Yada T."/>
            <person name="Nakamura Y."/>
            <person name="Ohara O."/>
            <person name="Isogai T."/>
            <person name="Sugano S."/>
        </authorList>
    </citation>
    <scope>NUCLEOTIDE SEQUENCE [LARGE SCALE MRNA] (ISOFORM 2)</scope>
    <source>
        <tissue>Uterus</tissue>
    </source>
</reference>
<reference key="6">
    <citation type="journal article" date="2006" name="Nature">
        <title>The DNA sequence and biological annotation of human chromosome 1.</title>
        <authorList>
            <person name="Gregory S.G."/>
            <person name="Barlow K.F."/>
            <person name="McLay K.E."/>
            <person name="Kaul R."/>
            <person name="Swarbreck D."/>
            <person name="Dunham A."/>
            <person name="Scott C.E."/>
            <person name="Howe K.L."/>
            <person name="Woodfine K."/>
            <person name="Spencer C.C.A."/>
            <person name="Jones M.C."/>
            <person name="Gillson C."/>
            <person name="Searle S."/>
            <person name="Zhou Y."/>
            <person name="Kokocinski F."/>
            <person name="McDonald L."/>
            <person name="Evans R."/>
            <person name="Phillips K."/>
            <person name="Atkinson A."/>
            <person name="Cooper R."/>
            <person name="Jones C."/>
            <person name="Hall R.E."/>
            <person name="Andrews T.D."/>
            <person name="Lloyd C."/>
            <person name="Ainscough R."/>
            <person name="Almeida J.P."/>
            <person name="Ambrose K.D."/>
            <person name="Anderson F."/>
            <person name="Andrew R.W."/>
            <person name="Ashwell R.I.S."/>
            <person name="Aubin K."/>
            <person name="Babbage A.K."/>
            <person name="Bagguley C.L."/>
            <person name="Bailey J."/>
            <person name="Beasley H."/>
            <person name="Bethel G."/>
            <person name="Bird C.P."/>
            <person name="Bray-Allen S."/>
            <person name="Brown J.Y."/>
            <person name="Brown A.J."/>
            <person name="Buckley D."/>
            <person name="Burton J."/>
            <person name="Bye J."/>
            <person name="Carder C."/>
            <person name="Chapman J.C."/>
            <person name="Clark S.Y."/>
            <person name="Clarke G."/>
            <person name="Clee C."/>
            <person name="Cobley V."/>
            <person name="Collier R.E."/>
            <person name="Corby N."/>
            <person name="Coville G.J."/>
            <person name="Davies J."/>
            <person name="Deadman R."/>
            <person name="Dunn M."/>
            <person name="Earthrowl M."/>
            <person name="Ellington A.G."/>
            <person name="Errington H."/>
            <person name="Frankish A."/>
            <person name="Frankland J."/>
            <person name="French L."/>
            <person name="Garner P."/>
            <person name="Garnett J."/>
            <person name="Gay L."/>
            <person name="Ghori M.R.J."/>
            <person name="Gibson R."/>
            <person name="Gilby L.M."/>
            <person name="Gillett W."/>
            <person name="Glithero R.J."/>
            <person name="Grafham D.V."/>
            <person name="Griffiths C."/>
            <person name="Griffiths-Jones S."/>
            <person name="Grocock R."/>
            <person name="Hammond S."/>
            <person name="Harrison E.S.I."/>
            <person name="Hart E."/>
            <person name="Haugen E."/>
            <person name="Heath P.D."/>
            <person name="Holmes S."/>
            <person name="Holt K."/>
            <person name="Howden P.J."/>
            <person name="Hunt A.R."/>
            <person name="Hunt S.E."/>
            <person name="Hunter G."/>
            <person name="Isherwood J."/>
            <person name="James R."/>
            <person name="Johnson C."/>
            <person name="Johnson D."/>
            <person name="Joy A."/>
            <person name="Kay M."/>
            <person name="Kershaw J.K."/>
            <person name="Kibukawa M."/>
            <person name="Kimberley A.M."/>
            <person name="King A."/>
            <person name="Knights A.J."/>
            <person name="Lad H."/>
            <person name="Laird G."/>
            <person name="Lawlor S."/>
            <person name="Leongamornlert D.A."/>
            <person name="Lloyd D.M."/>
            <person name="Loveland J."/>
            <person name="Lovell J."/>
            <person name="Lush M.J."/>
            <person name="Lyne R."/>
            <person name="Martin S."/>
            <person name="Mashreghi-Mohammadi M."/>
            <person name="Matthews L."/>
            <person name="Matthews N.S.W."/>
            <person name="McLaren S."/>
            <person name="Milne S."/>
            <person name="Mistry S."/>
            <person name="Moore M.J.F."/>
            <person name="Nickerson T."/>
            <person name="O'Dell C.N."/>
            <person name="Oliver K."/>
            <person name="Palmeiri A."/>
            <person name="Palmer S.A."/>
            <person name="Parker A."/>
            <person name="Patel D."/>
            <person name="Pearce A.V."/>
            <person name="Peck A.I."/>
            <person name="Pelan S."/>
            <person name="Phelps K."/>
            <person name="Phillimore B.J."/>
            <person name="Plumb R."/>
            <person name="Rajan J."/>
            <person name="Raymond C."/>
            <person name="Rouse G."/>
            <person name="Saenphimmachak C."/>
            <person name="Sehra H.K."/>
            <person name="Sheridan E."/>
            <person name="Shownkeen R."/>
            <person name="Sims S."/>
            <person name="Skuce C.D."/>
            <person name="Smith M."/>
            <person name="Steward C."/>
            <person name="Subramanian S."/>
            <person name="Sycamore N."/>
            <person name="Tracey A."/>
            <person name="Tromans A."/>
            <person name="Van Helmond Z."/>
            <person name="Wall M."/>
            <person name="Wallis J.M."/>
            <person name="White S."/>
            <person name="Whitehead S.L."/>
            <person name="Wilkinson J.E."/>
            <person name="Willey D.L."/>
            <person name="Williams H."/>
            <person name="Wilming L."/>
            <person name="Wray P.W."/>
            <person name="Wu Z."/>
            <person name="Coulson A."/>
            <person name="Vaudin M."/>
            <person name="Sulston J.E."/>
            <person name="Durbin R.M."/>
            <person name="Hubbard T."/>
            <person name="Wooster R."/>
            <person name="Dunham I."/>
            <person name="Carter N.P."/>
            <person name="McVean G."/>
            <person name="Ross M.T."/>
            <person name="Harrow J."/>
            <person name="Olson M.V."/>
            <person name="Beck S."/>
            <person name="Rogers J."/>
            <person name="Bentley D.R."/>
        </authorList>
    </citation>
    <scope>NUCLEOTIDE SEQUENCE [LARGE SCALE GENOMIC DNA]</scope>
</reference>
<reference key="7">
    <citation type="submission" date="2005-09" db="EMBL/GenBank/DDBJ databases">
        <authorList>
            <person name="Mural R.J."/>
            <person name="Istrail S."/>
            <person name="Sutton G.G."/>
            <person name="Florea L."/>
            <person name="Halpern A.L."/>
            <person name="Mobarry C.M."/>
            <person name="Lippert R."/>
            <person name="Walenz B."/>
            <person name="Shatkay H."/>
            <person name="Dew I."/>
            <person name="Miller J.R."/>
            <person name="Flanigan M.J."/>
            <person name="Edwards N.J."/>
            <person name="Bolanos R."/>
            <person name="Fasulo D."/>
            <person name="Halldorsson B.V."/>
            <person name="Hannenhalli S."/>
            <person name="Turner R."/>
            <person name="Yooseph S."/>
            <person name="Lu F."/>
            <person name="Nusskern D.R."/>
            <person name="Shue B.C."/>
            <person name="Zheng X.H."/>
            <person name="Zhong F."/>
            <person name="Delcher A.L."/>
            <person name="Huson D.H."/>
            <person name="Kravitz S.A."/>
            <person name="Mouchard L."/>
            <person name="Reinert K."/>
            <person name="Remington K.A."/>
            <person name="Clark A.G."/>
            <person name="Waterman M.S."/>
            <person name="Eichler E.E."/>
            <person name="Adams M.D."/>
            <person name="Hunkapiller M.W."/>
            <person name="Myers E.W."/>
            <person name="Venter J.C."/>
        </authorList>
    </citation>
    <scope>NUCLEOTIDE SEQUENCE [LARGE SCALE GENOMIC DNA]</scope>
</reference>
<reference key="8">
    <citation type="journal article" date="2004" name="Genome Res.">
        <title>The status, quality, and expansion of the NIH full-length cDNA project: the Mammalian Gene Collection (MGC).</title>
        <authorList>
            <consortium name="The MGC Project Team"/>
        </authorList>
    </citation>
    <scope>NUCLEOTIDE SEQUENCE [LARGE SCALE MRNA] (ISOFORM 1)</scope>
    <source>
        <tissue>Skin</tissue>
    </source>
</reference>
<reference key="9">
    <citation type="journal article" date="2005" name="Genes Cells">
        <title>Tisp40, a spermatid specific bZip transcription factor, functions by binding to the unfolded protein response element via the Rip pathway.</title>
        <authorList>
            <person name="Nagamori I."/>
            <person name="Yabuta N."/>
            <person name="Fujii T."/>
            <person name="Tanaka H."/>
            <person name="Yomogida K."/>
            <person name="Nishimune Y."/>
            <person name="Nojima H."/>
        </authorList>
    </citation>
    <scope>SUBCELLULAR LOCATION</scope>
    <scope>TOPOLOGY</scope>
    <scope>GLYCOSYLATION</scope>
</reference>
<reference key="10">
    <citation type="journal article" date="2006" name="Mol. Biol. Cell">
        <title>CREB4, a transmembrane bZip transcription factor and potential new substrate for regulation and cleavage by S1P.</title>
        <authorList>
            <person name="Stirling J."/>
            <person name="O'hare P."/>
        </authorList>
    </citation>
    <scope>FUNCTION</scope>
    <scope>SUBCELLULAR LOCATION</scope>
    <scope>MUTAGENESIS OF ARG-335</scope>
</reference>
<reference key="11">
    <citation type="journal article" date="2007" name="Urology">
        <title>Evaluation of AIbZIP and Cdc47 as markers for human prostatic diseases.</title>
        <authorList>
            <person name="Levesque M.H."/>
            <person name="El-Alfy M."/>
            <person name="Berger L."/>
            <person name="Labrie F."/>
            <person name="Labrie C."/>
        </authorList>
    </citation>
    <scope>TISSUE SPECIFICITY</scope>
</reference>
<feature type="chain" id="PRO_0000288079" description="Cyclic AMP-responsive element-binding protein 3-like protein 4">
    <location>
        <begin position="1"/>
        <end position="395"/>
    </location>
</feature>
<feature type="chain" id="PRO_0000296219" description="Processed cyclic AMP-responsive element-binding protein 3-like protein 4">
    <location>
        <begin position="1"/>
        <end status="unknown"/>
    </location>
</feature>
<feature type="topological domain" description="Cytoplasmic" evidence="2">
    <location>
        <begin position="1"/>
        <end position="295"/>
    </location>
</feature>
<feature type="transmembrane region" description="Helical; Signal-anchor for type II membrane protein" evidence="2">
    <location>
        <begin position="296"/>
        <end position="316"/>
    </location>
</feature>
<feature type="topological domain" description="Lumenal" evidence="2">
    <location>
        <begin position="317"/>
        <end position="395"/>
    </location>
</feature>
<feature type="domain" description="bZIP" evidence="3">
    <location>
        <begin position="217"/>
        <end position="280"/>
    </location>
</feature>
<feature type="region of interest" description="Disordered" evidence="4">
    <location>
        <begin position="82"/>
        <end position="108"/>
    </location>
</feature>
<feature type="region of interest" description="Basic motif" evidence="3">
    <location>
        <begin position="219"/>
        <end position="248"/>
    </location>
</feature>
<feature type="region of interest" description="Leucine-zipper" evidence="3">
    <location>
        <begin position="259"/>
        <end position="280"/>
    </location>
</feature>
<feature type="region of interest" description="Disordered" evidence="4">
    <location>
        <begin position="355"/>
        <end position="395"/>
    </location>
</feature>
<feature type="site" description="Cleavage; by PS1" evidence="1">
    <location>
        <begin position="338"/>
        <end position="339"/>
    </location>
</feature>
<feature type="glycosylation site" description="N-linked (GlcNAc...) asparagine" evidence="2">
    <location>
        <position position="366"/>
    </location>
</feature>
<feature type="splice variant" id="VSP_045426" description="In isoform 2." evidence="10">
    <location>
        <begin position="39"/>
        <end position="58"/>
    </location>
</feature>
<feature type="sequence variant" id="VAR_048444" description="In dbSNP:rs11264743.">
    <original>P</original>
    <variation>S</variation>
    <location>
        <position position="95"/>
    </location>
</feature>
<feature type="mutagenesis site" description="Abolishes cleavage by SP1." evidence="8">
    <original>R</original>
    <variation>G</variation>
    <location>
        <position position="335"/>
    </location>
</feature>
<feature type="sequence conflict" description="In Ref. 2; AAO33070." evidence="11" ref="2">
    <original>P</original>
    <variation>L</variation>
    <location>
        <position position="35"/>
    </location>
</feature>
<evidence type="ECO:0000250" key="1"/>
<evidence type="ECO:0000255" key="2"/>
<evidence type="ECO:0000255" key="3">
    <source>
        <dbReference type="PROSITE-ProRule" id="PRU00978"/>
    </source>
</evidence>
<evidence type="ECO:0000256" key="4">
    <source>
        <dbReference type="SAM" id="MobiDB-lite"/>
    </source>
</evidence>
<evidence type="ECO:0000269" key="5">
    <source>
    </source>
</evidence>
<evidence type="ECO:0000269" key="6">
    <source>
    </source>
</evidence>
<evidence type="ECO:0000269" key="7">
    <source>
    </source>
</evidence>
<evidence type="ECO:0000269" key="8">
    <source>
    </source>
</evidence>
<evidence type="ECO:0000269" key="9">
    <source>
    </source>
</evidence>
<evidence type="ECO:0000303" key="10">
    <source>
    </source>
</evidence>
<evidence type="ECO:0000305" key="11"/>
<organism>
    <name type="scientific">Homo sapiens</name>
    <name type="common">Human</name>
    <dbReference type="NCBI Taxonomy" id="9606"/>
    <lineage>
        <taxon>Eukaryota</taxon>
        <taxon>Metazoa</taxon>
        <taxon>Chordata</taxon>
        <taxon>Craniata</taxon>
        <taxon>Vertebrata</taxon>
        <taxon>Euteleostomi</taxon>
        <taxon>Mammalia</taxon>
        <taxon>Eutheria</taxon>
        <taxon>Euarchontoglires</taxon>
        <taxon>Primates</taxon>
        <taxon>Haplorrhini</taxon>
        <taxon>Catarrhini</taxon>
        <taxon>Hominidae</taxon>
        <taxon>Homo</taxon>
    </lineage>
</organism>
<gene>
    <name type="primary">CREB3L4</name>
    <name type="synonym">AIBZIP</name>
    <name type="synonym">CREB4</name>
    <name type="synonym">JAL</name>
</gene>
<dbReference type="EMBL" id="AF394167">
    <property type="protein sequence ID" value="AAL76113.1"/>
    <property type="molecule type" value="mRNA"/>
</dbReference>
<dbReference type="EMBL" id="AF468007">
    <property type="protein sequence ID" value="AAO33070.1"/>
    <property type="molecule type" value="mRNA"/>
</dbReference>
<dbReference type="EMBL" id="AB052778">
    <property type="protein sequence ID" value="BAC45035.1"/>
    <property type="molecule type" value="mRNA"/>
</dbReference>
<dbReference type="EMBL" id="AB052781">
    <property type="protein sequence ID" value="BAC45224.1"/>
    <property type="molecule type" value="Genomic_DNA"/>
</dbReference>
<dbReference type="EMBL" id="AY049977">
    <property type="protein sequence ID" value="AAL13157.1"/>
    <property type="molecule type" value="mRNA"/>
</dbReference>
<dbReference type="EMBL" id="AK304665">
    <property type="protein sequence ID" value="BAG65440.1"/>
    <property type="molecule type" value="mRNA"/>
</dbReference>
<dbReference type="EMBL" id="AL358472">
    <property type="status" value="NOT_ANNOTATED_CDS"/>
    <property type="molecule type" value="Genomic_DNA"/>
</dbReference>
<dbReference type="EMBL" id="CH471121">
    <property type="protein sequence ID" value="EAW53251.1"/>
    <property type="molecule type" value="Genomic_DNA"/>
</dbReference>
<dbReference type="EMBL" id="CH471121">
    <property type="protein sequence ID" value="EAW53253.1"/>
    <property type="molecule type" value="Genomic_DNA"/>
</dbReference>
<dbReference type="EMBL" id="CH471121">
    <property type="protein sequence ID" value="EAW53254.1"/>
    <property type="molecule type" value="Genomic_DNA"/>
</dbReference>
<dbReference type="EMBL" id="CH471121">
    <property type="protein sequence ID" value="EAW53256.1"/>
    <property type="molecule type" value="Genomic_DNA"/>
</dbReference>
<dbReference type="EMBL" id="CH471121">
    <property type="protein sequence ID" value="EAW53257.1"/>
    <property type="molecule type" value="Genomic_DNA"/>
</dbReference>
<dbReference type="EMBL" id="CH471121">
    <property type="protein sequence ID" value="EAW53258.1"/>
    <property type="molecule type" value="Genomic_DNA"/>
</dbReference>
<dbReference type="EMBL" id="BC038962">
    <property type="protein sequence ID" value="AAH38962.1"/>
    <property type="molecule type" value="mRNA"/>
</dbReference>
<dbReference type="CCDS" id="CCDS1056.1">
    <molecule id="Q8TEY5-1"/>
</dbReference>
<dbReference type="CCDS" id="CCDS58029.1">
    <molecule id="Q8TEY5-2"/>
</dbReference>
<dbReference type="RefSeq" id="NP_001242907.1">
    <molecule id="Q8TEY5-1"/>
    <property type="nucleotide sequence ID" value="NM_001255978.2"/>
</dbReference>
<dbReference type="RefSeq" id="NP_001242908.1">
    <molecule id="Q8TEY5-1"/>
    <property type="nucleotide sequence ID" value="NM_001255979.2"/>
</dbReference>
<dbReference type="RefSeq" id="NP_001242909.1">
    <molecule id="Q8TEY5-2"/>
    <property type="nucleotide sequence ID" value="NM_001255980.2"/>
</dbReference>
<dbReference type="RefSeq" id="NP_001242910.1">
    <molecule id="Q8TEY5-2"/>
    <property type="nucleotide sequence ID" value="NM_001255981.2"/>
</dbReference>
<dbReference type="RefSeq" id="NP_570968.1">
    <molecule id="Q8TEY5-1"/>
    <property type="nucleotide sequence ID" value="NM_130898.4"/>
</dbReference>
<dbReference type="RefSeq" id="XP_006711235.1">
    <molecule id="Q8TEY5-2"/>
    <property type="nucleotide sequence ID" value="XM_006711172.3"/>
</dbReference>
<dbReference type="RefSeq" id="XP_016855861.1">
    <molecule id="Q8TEY5-2"/>
    <property type="nucleotide sequence ID" value="XM_017000372.2"/>
</dbReference>
<dbReference type="RefSeq" id="XP_024309111.1">
    <molecule id="Q8TEY5-1"/>
    <property type="nucleotide sequence ID" value="XM_024453343.2"/>
</dbReference>
<dbReference type="RefSeq" id="XP_024309112.1">
    <molecule id="Q8TEY5-1"/>
    <property type="nucleotide sequence ID" value="XM_024453344.2"/>
</dbReference>
<dbReference type="RefSeq" id="XP_024309114.1">
    <molecule id="Q8TEY5-1"/>
    <property type="nucleotide sequence ID" value="XM_024453346.2"/>
</dbReference>
<dbReference type="RefSeq" id="XP_047302783.1">
    <molecule id="Q8TEY5-2"/>
    <property type="nucleotide sequence ID" value="XM_047446827.1"/>
</dbReference>
<dbReference type="RefSeq" id="XP_054190525.1">
    <molecule id="Q8TEY5-1"/>
    <property type="nucleotide sequence ID" value="XM_054334550.1"/>
</dbReference>
<dbReference type="RefSeq" id="XP_054190526.1">
    <molecule id="Q8TEY5-1"/>
    <property type="nucleotide sequence ID" value="XM_054334551.1"/>
</dbReference>
<dbReference type="RefSeq" id="XP_054190527.1">
    <molecule id="Q8TEY5-1"/>
    <property type="nucleotide sequence ID" value="XM_054334552.1"/>
</dbReference>
<dbReference type="RefSeq" id="XP_054190528.1">
    <molecule id="Q8TEY5-2"/>
    <property type="nucleotide sequence ID" value="XM_054334553.1"/>
</dbReference>
<dbReference type="RefSeq" id="XP_054190529.1">
    <molecule id="Q8TEY5-2"/>
    <property type="nucleotide sequence ID" value="XM_054334554.1"/>
</dbReference>
<dbReference type="RefSeq" id="XP_054190530.1">
    <molecule id="Q8TEY5-2"/>
    <property type="nucleotide sequence ID" value="XM_054334555.1"/>
</dbReference>
<dbReference type="SMR" id="Q8TEY5"/>
<dbReference type="BioGRID" id="127142">
    <property type="interactions" value="14"/>
</dbReference>
<dbReference type="FunCoup" id="Q8TEY5">
    <property type="interactions" value="1622"/>
</dbReference>
<dbReference type="IntAct" id="Q8TEY5">
    <property type="interactions" value="7"/>
</dbReference>
<dbReference type="STRING" id="9606.ENSP00000271889"/>
<dbReference type="GlyCosmos" id="Q8TEY5">
    <property type="glycosylation" value="1 site, No reported glycans"/>
</dbReference>
<dbReference type="GlyGen" id="Q8TEY5">
    <property type="glycosylation" value="8 sites, 2 O-linked glycans (7 sites)"/>
</dbReference>
<dbReference type="iPTMnet" id="Q8TEY5"/>
<dbReference type="PhosphoSitePlus" id="Q8TEY5"/>
<dbReference type="SwissPalm" id="Q8TEY5"/>
<dbReference type="BioMuta" id="CREB3L4"/>
<dbReference type="DMDM" id="74751463"/>
<dbReference type="MassIVE" id="Q8TEY5"/>
<dbReference type="PaxDb" id="9606-ENSP00000357596"/>
<dbReference type="PeptideAtlas" id="Q8TEY5"/>
<dbReference type="ProteomicsDB" id="64469"/>
<dbReference type="ProteomicsDB" id="74525">
    <molecule id="Q8TEY5-1"/>
</dbReference>
<dbReference type="Antibodypedia" id="34142">
    <property type="antibodies" value="270 antibodies from 35 providers"/>
</dbReference>
<dbReference type="DNASU" id="148327"/>
<dbReference type="Ensembl" id="ENST00000271889.8">
    <molecule id="Q8TEY5-1"/>
    <property type="protein sequence ID" value="ENSP00000271889.4"/>
    <property type="gene ID" value="ENSG00000143578.16"/>
</dbReference>
<dbReference type="Ensembl" id="ENST00000368600.7">
    <molecule id="Q8TEY5-2"/>
    <property type="protein sequence ID" value="ENSP00000357589.3"/>
    <property type="gene ID" value="ENSG00000143578.16"/>
</dbReference>
<dbReference type="Ensembl" id="ENST00000368603.5">
    <molecule id="Q8TEY5-1"/>
    <property type="protein sequence ID" value="ENSP00000357592.1"/>
    <property type="gene ID" value="ENSG00000143578.16"/>
</dbReference>
<dbReference type="Ensembl" id="ENST00000368607.8">
    <molecule id="Q8TEY5-1"/>
    <property type="protein sequence ID" value="ENSP00000357596.3"/>
    <property type="gene ID" value="ENSG00000143578.16"/>
</dbReference>
<dbReference type="GeneID" id="148327"/>
<dbReference type="KEGG" id="hsa:148327"/>
<dbReference type="MANE-Select" id="ENST00000368607.8">
    <property type="protein sequence ID" value="ENSP00000357596.3"/>
    <property type="RefSeq nucleotide sequence ID" value="NM_001255978.2"/>
    <property type="RefSeq protein sequence ID" value="NP_001242907.1"/>
</dbReference>
<dbReference type="UCSC" id="uc001fdm.3">
    <molecule id="Q8TEY5-1"/>
    <property type="organism name" value="human"/>
</dbReference>
<dbReference type="AGR" id="HGNC:18854"/>
<dbReference type="CTD" id="148327"/>
<dbReference type="DisGeNET" id="148327"/>
<dbReference type="GeneCards" id="CREB3L4"/>
<dbReference type="HGNC" id="HGNC:18854">
    <property type="gene designation" value="CREB3L4"/>
</dbReference>
<dbReference type="HPA" id="ENSG00000143578">
    <property type="expression patterns" value="Tissue enhanced (prostate)"/>
</dbReference>
<dbReference type="MIM" id="607138">
    <property type="type" value="gene"/>
</dbReference>
<dbReference type="neXtProt" id="NX_Q8TEY5"/>
<dbReference type="OpenTargets" id="ENSG00000143578"/>
<dbReference type="PharmGKB" id="PA134922919"/>
<dbReference type="VEuPathDB" id="HostDB:ENSG00000143578"/>
<dbReference type="eggNOG" id="KOG0709">
    <property type="taxonomic scope" value="Eukaryota"/>
</dbReference>
<dbReference type="GeneTree" id="ENSGT00940000160806"/>
<dbReference type="HOGENOM" id="CLU_047257_3_0_1"/>
<dbReference type="InParanoid" id="Q8TEY5"/>
<dbReference type="OMA" id="AGPEEYQ"/>
<dbReference type="OrthoDB" id="674948at2759"/>
<dbReference type="PAN-GO" id="Q8TEY5">
    <property type="GO annotations" value="4 GO annotations based on evolutionary models"/>
</dbReference>
<dbReference type="PhylomeDB" id="Q8TEY5"/>
<dbReference type="TreeFam" id="TF316079"/>
<dbReference type="PathwayCommons" id="Q8TEY5"/>
<dbReference type="Reactome" id="R-HSA-8874211">
    <property type="pathway name" value="CREB3 factors activate genes"/>
</dbReference>
<dbReference type="SignaLink" id="Q8TEY5"/>
<dbReference type="BioGRID-ORCS" id="148327">
    <property type="hits" value="21 hits in 1177 CRISPR screens"/>
</dbReference>
<dbReference type="ChiTaRS" id="CREB3L4">
    <property type="organism name" value="human"/>
</dbReference>
<dbReference type="GenomeRNAi" id="148327"/>
<dbReference type="Pharos" id="Q8TEY5">
    <property type="development level" value="Tbio"/>
</dbReference>
<dbReference type="PRO" id="PR:Q8TEY5"/>
<dbReference type="Proteomes" id="UP000005640">
    <property type="component" value="Chromosome 1"/>
</dbReference>
<dbReference type="RNAct" id="Q8TEY5">
    <property type="molecule type" value="protein"/>
</dbReference>
<dbReference type="Bgee" id="ENSG00000143578">
    <property type="expression patterns" value="Expressed in parotid gland and 148 other cell types or tissues"/>
</dbReference>
<dbReference type="ExpressionAtlas" id="Q8TEY5">
    <property type="expression patterns" value="baseline and differential"/>
</dbReference>
<dbReference type="GO" id="GO:0000785">
    <property type="term" value="C:chromatin"/>
    <property type="evidence" value="ECO:0000247"/>
    <property type="project" value="NTNU_SB"/>
</dbReference>
<dbReference type="GO" id="GO:0005783">
    <property type="term" value="C:endoplasmic reticulum"/>
    <property type="evidence" value="ECO:0000314"/>
    <property type="project" value="ParkinsonsUK-UCL"/>
</dbReference>
<dbReference type="GO" id="GO:0005789">
    <property type="term" value="C:endoplasmic reticulum membrane"/>
    <property type="evidence" value="ECO:0007669"/>
    <property type="project" value="UniProtKB-SubCell"/>
</dbReference>
<dbReference type="GO" id="GO:0005794">
    <property type="term" value="C:Golgi apparatus"/>
    <property type="evidence" value="ECO:0000314"/>
    <property type="project" value="ParkinsonsUK-UCL"/>
</dbReference>
<dbReference type="GO" id="GO:0000139">
    <property type="term" value="C:Golgi membrane"/>
    <property type="evidence" value="ECO:0007669"/>
    <property type="project" value="UniProtKB-SubCell"/>
</dbReference>
<dbReference type="GO" id="GO:0005739">
    <property type="term" value="C:mitochondrion"/>
    <property type="evidence" value="ECO:0000314"/>
    <property type="project" value="HPA"/>
</dbReference>
<dbReference type="GO" id="GO:0031965">
    <property type="term" value="C:nuclear membrane"/>
    <property type="evidence" value="ECO:0000314"/>
    <property type="project" value="HPA"/>
</dbReference>
<dbReference type="GO" id="GO:0005654">
    <property type="term" value="C:nucleoplasm"/>
    <property type="evidence" value="ECO:0000314"/>
    <property type="project" value="HPA"/>
</dbReference>
<dbReference type="GO" id="GO:0005634">
    <property type="term" value="C:nucleus"/>
    <property type="evidence" value="ECO:0000318"/>
    <property type="project" value="GO_Central"/>
</dbReference>
<dbReference type="GO" id="GO:0001228">
    <property type="term" value="F:DNA-binding transcription activator activity, RNA polymerase II-specific"/>
    <property type="evidence" value="ECO:0007669"/>
    <property type="project" value="Ensembl"/>
</dbReference>
<dbReference type="GO" id="GO:0000981">
    <property type="term" value="F:DNA-binding transcription factor activity, RNA polymerase II-specific"/>
    <property type="evidence" value="ECO:0000247"/>
    <property type="project" value="NTNU_SB"/>
</dbReference>
<dbReference type="GO" id="GO:0000978">
    <property type="term" value="F:RNA polymerase II cis-regulatory region sequence-specific DNA binding"/>
    <property type="evidence" value="ECO:0000318"/>
    <property type="project" value="GO_Central"/>
</dbReference>
<dbReference type="GO" id="GO:1990837">
    <property type="term" value="F:sequence-specific double-stranded DNA binding"/>
    <property type="evidence" value="ECO:0000314"/>
    <property type="project" value="ARUK-UCL"/>
</dbReference>
<dbReference type="GO" id="GO:0045944">
    <property type="term" value="P:positive regulation of transcription by RNA polymerase II"/>
    <property type="evidence" value="ECO:0000314"/>
    <property type="project" value="ParkinsonsUK-UCL"/>
</dbReference>
<dbReference type="GO" id="GO:0006357">
    <property type="term" value="P:regulation of transcription by RNA polymerase II"/>
    <property type="evidence" value="ECO:0000318"/>
    <property type="project" value="GO_Central"/>
</dbReference>
<dbReference type="GO" id="GO:0006986">
    <property type="term" value="P:response to unfolded protein"/>
    <property type="evidence" value="ECO:0007669"/>
    <property type="project" value="UniProtKB-KW"/>
</dbReference>
<dbReference type="GO" id="GO:0007283">
    <property type="term" value="P:spermatogenesis"/>
    <property type="evidence" value="ECO:0007669"/>
    <property type="project" value="Ensembl"/>
</dbReference>
<dbReference type="CDD" id="cd14689">
    <property type="entry name" value="bZIP_CREB3"/>
    <property type="match status" value="1"/>
</dbReference>
<dbReference type="FunFam" id="1.20.5.170:FF:000042">
    <property type="entry name" value="Cyclic AMP-responsive element-binding protein 3-like protein 3"/>
    <property type="match status" value="1"/>
</dbReference>
<dbReference type="Gene3D" id="1.20.5.170">
    <property type="match status" value="1"/>
</dbReference>
<dbReference type="InterPro" id="IPR004827">
    <property type="entry name" value="bZIP"/>
</dbReference>
<dbReference type="InterPro" id="IPR046347">
    <property type="entry name" value="bZIP_sf"/>
</dbReference>
<dbReference type="InterPro" id="IPR051381">
    <property type="entry name" value="CREB_ATF_subfamily"/>
</dbReference>
<dbReference type="PANTHER" id="PTHR45996">
    <property type="entry name" value="AGAP001464-PB"/>
    <property type="match status" value="1"/>
</dbReference>
<dbReference type="PANTHER" id="PTHR45996:SF2">
    <property type="entry name" value="CYCLIC AMP-RESPONSIVE ELEMENT-BINDING PROTEIN 3-LIKE PROTEIN 4"/>
    <property type="match status" value="1"/>
</dbReference>
<dbReference type="Pfam" id="PF00170">
    <property type="entry name" value="bZIP_1"/>
    <property type="match status" value="1"/>
</dbReference>
<dbReference type="SMART" id="SM00338">
    <property type="entry name" value="BRLZ"/>
    <property type="match status" value="1"/>
</dbReference>
<dbReference type="SUPFAM" id="SSF57959">
    <property type="entry name" value="Leucine zipper domain"/>
    <property type="match status" value="1"/>
</dbReference>
<dbReference type="PROSITE" id="PS50217">
    <property type="entry name" value="BZIP"/>
    <property type="match status" value="1"/>
</dbReference>
<accession>Q8TEY5</accession>
<accession>D3DV62</accession>
<accession>Q5T4L0</accession>
<accession>Q86YW6</accession>
<protein>
    <recommendedName>
        <fullName>Cyclic AMP-responsive element-binding protein 3-like protein 4</fullName>
        <shortName>cAMP-responsive element-binding protein 3-like protein 4</shortName>
    </recommendedName>
    <alternativeName>
        <fullName>Androgen-induced basic leucine zipper protein</fullName>
        <shortName>AIbZIP</shortName>
    </alternativeName>
    <alternativeName>
        <fullName>Attaching to CRE-like 1</fullName>
        <shortName>ATCE1</shortName>
    </alternativeName>
    <alternativeName>
        <fullName>Cyclic AMP-responsive element-binding protein 4</fullName>
        <shortName>CREB-4</shortName>
        <shortName>cAMP-responsive element-binding protein 4</shortName>
    </alternativeName>
    <alternativeName>
        <fullName>Transcript induced in spermiogenesis protein 40</fullName>
        <shortName>Tisp40</shortName>
    </alternativeName>
    <alternativeName>
        <fullName>hJAL</fullName>
    </alternativeName>
    <component>
        <recommendedName>
            <fullName>Processed cyclic AMP-responsive element-binding protein 3-like protein 4</fullName>
        </recommendedName>
    </component>
</protein>
<proteinExistence type="evidence at protein level"/>